<dbReference type="EMBL" id="EQ962657">
    <property type="protein sequence ID" value="EED14938.1"/>
    <property type="molecule type" value="Genomic_DNA"/>
</dbReference>
<dbReference type="RefSeq" id="XP_002484891.1">
    <property type="nucleotide sequence ID" value="XM_002484846.1"/>
</dbReference>
<dbReference type="SMR" id="B8MKT9"/>
<dbReference type="STRING" id="441959.B8MKT9"/>
<dbReference type="GeneID" id="8097913"/>
<dbReference type="eggNOG" id="ENOG502QT3W">
    <property type="taxonomic scope" value="Eukaryota"/>
</dbReference>
<dbReference type="HOGENOM" id="CLU_036502_1_0_1"/>
<dbReference type="InParanoid" id="B8MKT9"/>
<dbReference type="OrthoDB" id="17927at2759"/>
<dbReference type="Proteomes" id="UP000001745">
    <property type="component" value="Unassembled WGS sequence"/>
</dbReference>
<dbReference type="GO" id="GO:0032865">
    <property type="term" value="C:ERMES complex"/>
    <property type="evidence" value="ECO:0007669"/>
    <property type="project" value="UniProtKB-UniRule"/>
</dbReference>
<dbReference type="GO" id="GO:0008289">
    <property type="term" value="F:lipid binding"/>
    <property type="evidence" value="ECO:0007669"/>
    <property type="project" value="UniProtKB-KW"/>
</dbReference>
<dbReference type="GO" id="GO:0000002">
    <property type="term" value="P:mitochondrial genome maintenance"/>
    <property type="evidence" value="ECO:0007669"/>
    <property type="project" value="UniProtKB-UniRule"/>
</dbReference>
<dbReference type="GO" id="GO:1990456">
    <property type="term" value="P:mitochondrion-endoplasmic reticulum membrane tethering"/>
    <property type="evidence" value="ECO:0007669"/>
    <property type="project" value="TreeGrafter"/>
</dbReference>
<dbReference type="GO" id="GO:0015914">
    <property type="term" value="P:phospholipid transport"/>
    <property type="evidence" value="ECO:0007669"/>
    <property type="project" value="TreeGrafter"/>
</dbReference>
<dbReference type="CDD" id="cd21673">
    <property type="entry name" value="SMP_Mdm34"/>
    <property type="match status" value="1"/>
</dbReference>
<dbReference type="HAMAP" id="MF_03105">
    <property type="entry name" value="Mdm34"/>
    <property type="match status" value="1"/>
</dbReference>
<dbReference type="InterPro" id="IPR027536">
    <property type="entry name" value="Mdm34"/>
</dbReference>
<dbReference type="InterPro" id="IPR031468">
    <property type="entry name" value="SMP_LBD"/>
</dbReference>
<dbReference type="PANTHER" id="PTHR28185">
    <property type="entry name" value="MITOCHONDRIAL DISTRIBUTION AND MORPHOLOGY PROTEIN 34"/>
    <property type="match status" value="1"/>
</dbReference>
<dbReference type="PANTHER" id="PTHR28185:SF1">
    <property type="entry name" value="MITOCHONDRIAL DISTRIBUTION AND MORPHOLOGY PROTEIN 34"/>
    <property type="match status" value="1"/>
</dbReference>
<dbReference type="PROSITE" id="PS51847">
    <property type="entry name" value="SMP"/>
    <property type="match status" value="1"/>
</dbReference>
<comment type="function">
    <text evidence="1">Component of the ERMES/MDM complex, which serves as a molecular tether to connect the endoplasmic reticulum (ER) and mitochondria. Components of this complex are involved in the control of mitochondrial shape and protein biogenesis, and function in nonvesicular lipid trafficking between the ER and mitochondria. Mdm34 is required for the interaction of the ER-resident membrane protein mmm1 and the outer mitochondrial membrane-resident beta-barrel protein mdm10.</text>
</comment>
<comment type="subunit">
    <text evidence="1">Component of the ER-mitochondria encounter structure (ERMES) or MDM complex, composed of mmm1, mdm10, mdm12 and mdm34.</text>
</comment>
<comment type="subcellular location">
    <subcellularLocation>
        <location evidence="1">Mitochondrion outer membrane</location>
        <topology evidence="1">Multi-pass membrane protein</topology>
    </subcellularLocation>
    <text evidence="1">The ERMES/MDM complex localizes to a few discrete foci (around 10 per single cell), that represent mitochondria-endoplasmic reticulum junctions. These foci are often found next to mtDNA nucleoids.</text>
</comment>
<comment type="domain">
    <text evidence="1">Lacks alpha-helical transmembrane segments, suggesting that it resides in the membrane via beta-sheet conformations similar to those predicted for other outer membrane proteins and porin.</text>
</comment>
<comment type="domain">
    <text evidence="1">The SMP-LTD domain is a barrel-like domain that can bind various types of glycerophospholipids in its interior and mediate their transfer between two adjacent bilayers.</text>
</comment>
<comment type="similarity">
    <text evidence="1">Belongs to the MDM34 family.</text>
</comment>
<evidence type="ECO:0000255" key="1">
    <source>
        <dbReference type="HAMAP-Rule" id="MF_03105"/>
    </source>
</evidence>
<evidence type="ECO:0000256" key="2">
    <source>
        <dbReference type="SAM" id="MobiDB-lite"/>
    </source>
</evidence>
<reference key="1">
    <citation type="journal article" date="2015" name="Genome Announc.">
        <title>Genome sequence of the AIDS-associated pathogen Penicillium marneffei (ATCC18224) and its near taxonomic relative Talaromyces stipitatus (ATCC10500).</title>
        <authorList>
            <person name="Nierman W.C."/>
            <person name="Fedorova-Abrams N.D."/>
            <person name="Andrianopoulos A."/>
        </authorList>
    </citation>
    <scope>NUCLEOTIDE SEQUENCE [LARGE SCALE GENOMIC DNA]</scope>
    <source>
        <strain>ATCC 10500 / CBS 375.48 / QM 6759 / NRRL 1006</strain>
    </source>
</reference>
<proteinExistence type="inferred from homology"/>
<protein>
    <recommendedName>
        <fullName evidence="1">Mitochondrial distribution and morphology protein 34</fullName>
    </recommendedName>
</protein>
<accession>B8MKT9</accession>
<feature type="chain" id="PRO_0000384365" description="Mitochondrial distribution and morphology protein 34">
    <location>
        <begin position="1"/>
        <end position="564"/>
    </location>
</feature>
<feature type="domain" description="SMP-LTD" evidence="1">
    <location>
        <begin position="1"/>
        <end position="208"/>
    </location>
</feature>
<feature type="region of interest" description="Disordered" evidence="2">
    <location>
        <begin position="208"/>
        <end position="240"/>
    </location>
</feature>
<feature type="region of interest" description="Disordered" evidence="2">
    <location>
        <begin position="336"/>
        <end position="397"/>
    </location>
</feature>
<feature type="region of interest" description="Disordered" evidence="2">
    <location>
        <begin position="404"/>
        <end position="423"/>
    </location>
</feature>
<feature type="region of interest" description="Disordered" evidence="2">
    <location>
        <begin position="434"/>
        <end position="517"/>
    </location>
</feature>
<feature type="region of interest" description="Disordered" evidence="2">
    <location>
        <begin position="532"/>
        <end position="564"/>
    </location>
</feature>
<feature type="compositionally biased region" description="Polar residues" evidence="2">
    <location>
        <begin position="209"/>
        <end position="219"/>
    </location>
</feature>
<feature type="compositionally biased region" description="Basic residues" evidence="2">
    <location>
        <begin position="351"/>
        <end position="365"/>
    </location>
</feature>
<feature type="compositionally biased region" description="Basic and acidic residues" evidence="2">
    <location>
        <begin position="366"/>
        <end position="376"/>
    </location>
</feature>
<feature type="compositionally biased region" description="Low complexity" evidence="2">
    <location>
        <begin position="380"/>
        <end position="390"/>
    </location>
</feature>
<feature type="compositionally biased region" description="Polar residues" evidence="2">
    <location>
        <begin position="438"/>
        <end position="462"/>
    </location>
</feature>
<feature type="compositionally biased region" description="Polar residues" evidence="2">
    <location>
        <begin position="477"/>
        <end position="503"/>
    </location>
</feature>
<gene>
    <name evidence="1" type="primary">mdm34</name>
    <name type="ORF">TSTA_044050</name>
</gene>
<organism>
    <name type="scientific">Talaromyces stipitatus (strain ATCC 10500 / CBS 375.48 / QM 6759 / NRRL 1006)</name>
    <name type="common">Penicillium stipitatum</name>
    <dbReference type="NCBI Taxonomy" id="441959"/>
    <lineage>
        <taxon>Eukaryota</taxon>
        <taxon>Fungi</taxon>
        <taxon>Dikarya</taxon>
        <taxon>Ascomycota</taxon>
        <taxon>Pezizomycotina</taxon>
        <taxon>Eurotiomycetes</taxon>
        <taxon>Eurotiomycetidae</taxon>
        <taxon>Eurotiales</taxon>
        <taxon>Trichocomaceae</taxon>
        <taxon>Talaromyces</taxon>
        <taxon>Talaromyces sect. Talaromyces</taxon>
    </lineage>
</organism>
<sequence>MAFNFNWSPLMADAGFYTRAQDLLTAALNKSPKPPIIVDDIKVTELNLGSIPPDLEILEVGDLAEDRFRGIFKMSYNGDAFLTLKTRVQANPLNTFLVTRPSFASPKPLAAAAGLTIPLQITLSEFRLSGFVVLVFSKQKGITVVFRNDPLESLKVSSTFDSISFVRDYLQKAIEGQLRALFMDELPAIIHRLSLRLWVPEYRDRESESVNTLDQSSGPGQDPLASPPQDPVDASGNALNPSEVASLSLDSGVEIHSLFSQKNLLRLAALTDSQRTLSLFTPSIKDVVYRAWTASTELGDSNTLTSPASPVLSRAQSHIGSLHSFVDNASTISMQSGGSSNFSGHGLNLRSGRHPRPHGKKRKKRVVDLRRPKTTDDMESVSGESVFSSENATSAPTIFSSPAQFSEEKNDDPVTPPLAPQNDLHLPTIHERRRISQGEHTLTRRSVPSMSEVAQPSSSRNSAAMIADTWPDPDATPRNSIRLPSSDRANNPLTTAHLPSSAIQYPPPIPDNNDPRQQAWLSKMAAELARRIQEEKVGPSGSRPFPDFWDDHSREEIPPPAYGH</sequence>
<name>MDM34_TALSN</name>
<keyword id="KW-0445">Lipid transport</keyword>
<keyword id="KW-0446">Lipid-binding</keyword>
<keyword id="KW-0472">Membrane</keyword>
<keyword id="KW-0496">Mitochondrion</keyword>
<keyword id="KW-1000">Mitochondrion outer membrane</keyword>
<keyword id="KW-1185">Reference proteome</keyword>
<keyword id="KW-0812">Transmembrane</keyword>
<keyword id="KW-1134">Transmembrane beta strand</keyword>
<keyword id="KW-0813">Transport</keyword>